<sequence length="427" mass="47088">METTISEIHVENKDEKRSAEGSPGAERQKEKASMLCFKRRKKAAKALKPKAGSEAADVARKCPQEAGASDQPEPTRGAWASLKRLVTRRKRSESSKQQKPLEGEMQPAINAEDADLSKKKAKSRLKIPCIKFPRGPKRSNHSKIIEDSDCSIKVQEEAEILDIQTQTPLNDQATKAKSTQDLSEGISRKDGDEVCESNVSNSTTSGEKVISVELGLDNGHSAIQTGTLILEEIETIKEKQDVQPQQASPLETSETDHQQPVLSDVPPLPAIPDQQIVEEASNSTLESAPNGKDYESTEIVAEETKPKDTELSQESDFKENGITEEKSKSEESKRMEPIAIIITDTEISEFDVTKSKNVPKQFLISAENEQVGVFANDNGFEDRTSEQYETLLIETASSLVKNAIQLSIEQLVNEMASDDNKINNLLQ</sequence>
<accession>P24588</accession>
<accession>A2RRB8</accession>
<organism>
    <name type="scientific">Homo sapiens</name>
    <name type="common">Human</name>
    <dbReference type="NCBI Taxonomy" id="9606"/>
    <lineage>
        <taxon>Eukaryota</taxon>
        <taxon>Metazoa</taxon>
        <taxon>Chordata</taxon>
        <taxon>Craniata</taxon>
        <taxon>Vertebrata</taxon>
        <taxon>Euteleostomi</taxon>
        <taxon>Mammalia</taxon>
        <taxon>Eutheria</taxon>
        <taxon>Euarchontoglires</taxon>
        <taxon>Primates</taxon>
        <taxon>Haplorrhini</taxon>
        <taxon>Catarrhini</taxon>
        <taxon>Hominidae</taxon>
        <taxon>Homo</taxon>
    </lineage>
</organism>
<protein>
    <recommendedName>
        <fullName>A-kinase anchor protein 5</fullName>
        <shortName>AKAP-5</shortName>
    </recommendedName>
    <alternativeName>
        <fullName>A-kinase anchor protein 79 kDa</fullName>
        <shortName>AKAP 79</shortName>
    </alternativeName>
    <alternativeName>
        <fullName>H21</fullName>
    </alternativeName>
    <alternativeName>
        <fullName>cAMP-dependent protein kinase regulatory subunit II high affinity-binding protein</fullName>
    </alternativeName>
</protein>
<dbReference type="EMBL" id="M90359">
    <property type="protein sequence ID" value="AAA58363.1"/>
    <property type="molecule type" value="mRNA"/>
</dbReference>
<dbReference type="EMBL" id="AK315336">
    <property type="protein sequence ID" value="BAG37736.1"/>
    <property type="molecule type" value="mRNA"/>
</dbReference>
<dbReference type="EMBL" id="AL122035">
    <property type="status" value="NOT_ANNOTATED_CDS"/>
    <property type="molecule type" value="Genomic_DNA"/>
</dbReference>
<dbReference type="EMBL" id="CH471061">
    <property type="protein sequence ID" value="EAW80862.1"/>
    <property type="molecule type" value="Genomic_DNA"/>
</dbReference>
<dbReference type="EMBL" id="BC131516">
    <property type="protein sequence ID" value="AAI31517.1"/>
    <property type="molecule type" value="mRNA"/>
</dbReference>
<dbReference type="CCDS" id="CCDS9764.1"/>
<dbReference type="PIR" id="A43453">
    <property type="entry name" value="A43453"/>
</dbReference>
<dbReference type="RefSeq" id="NP_004848.3">
    <property type="nucleotide sequence ID" value="NM_004857.3"/>
</dbReference>
<dbReference type="PDB" id="2H9R">
    <property type="method" value="NMR"/>
    <property type="chains" value="C=391-412"/>
</dbReference>
<dbReference type="PDB" id="3LL8">
    <property type="method" value="X-ray"/>
    <property type="resolution" value="2.00 A"/>
    <property type="chains" value="E=336-346"/>
</dbReference>
<dbReference type="PDB" id="5NIN">
    <property type="method" value="X-ray"/>
    <property type="resolution" value="1.70 A"/>
    <property type="chains" value="C/D=77-92"/>
</dbReference>
<dbReference type="PDBsum" id="2H9R"/>
<dbReference type="PDBsum" id="3LL8"/>
<dbReference type="PDBsum" id="5NIN"/>
<dbReference type="BMRB" id="P24588"/>
<dbReference type="SMR" id="P24588"/>
<dbReference type="BioGRID" id="114874">
    <property type="interactions" value="76"/>
</dbReference>
<dbReference type="ComplexPortal" id="CPX-1112">
    <property type="entry name" value="Calcineurin-Calmodulin-AKAP5 complex, gamma-R1 variant"/>
</dbReference>
<dbReference type="ComplexPortal" id="CPX-1114">
    <property type="entry name" value="Calcineurin-Calmodulin-AKAP5 complex, alpha-R2 variant"/>
</dbReference>
<dbReference type="ComplexPortal" id="CPX-1116">
    <property type="entry name" value="Calcineurin-Calmodulin-AKAP5 complex, beta-R2 variant"/>
</dbReference>
<dbReference type="ComplexPortal" id="CPX-1118">
    <property type="entry name" value="Calcineurin-Calmodulin-AKAP5 complex, gamma-R2 variant"/>
</dbReference>
<dbReference type="ComplexPortal" id="CPX-674">
    <property type="entry name" value="Calcineurin-Calmodulin-AKAP5 complex, alpha-R1 variant"/>
</dbReference>
<dbReference type="ComplexPortal" id="CPX-998">
    <property type="entry name" value="Calcineurin-Calmodulin-AKAP5 complex, beta-R1 variant"/>
</dbReference>
<dbReference type="CORUM" id="P24588"/>
<dbReference type="DIP" id="DIP-186N"/>
<dbReference type="FunCoup" id="P24588">
    <property type="interactions" value="238"/>
</dbReference>
<dbReference type="IntAct" id="P24588">
    <property type="interactions" value="37"/>
</dbReference>
<dbReference type="MINT" id="P24588"/>
<dbReference type="STRING" id="9606.ENSP00000378207"/>
<dbReference type="TCDB" id="8.A.28.1.6">
    <property type="family name" value="the ankyrin (ankyrin) family"/>
</dbReference>
<dbReference type="iPTMnet" id="P24588"/>
<dbReference type="PhosphoSitePlus" id="P24588"/>
<dbReference type="SwissPalm" id="P24588"/>
<dbReference type="BioMuta" id="AKAP5"/>
<dbReference type="DMDM" id="281185503"/>
<dbReference type="jPOST" id="P24588"/>
<dbReference type="MassIVE" id="P24588"/>
<dbReference type="PaxDb" id="9606-ENSP00000378207"/>
<dbReference type="PeptideAtlas" id="P24588"/>
<dbReference type="ProteomicsDB" id="54217"/>
<dbReference type="Pumba" id="P24588"/>
<dbReference type="Antibodypedia" id="3806">
    <property type="antibodies" value="257 antibodies from 31 providers"/>
</dbReference>
<dbReference type="DNASU" id="9495"/>
<dbReference type="Ensembl" id="ENST00000320636.5">
    <property type="protein sequence ID" value="ENSP00000315615.5"/>
    <property type="gene ID" value="ENSG00000179841.8"/>
</dbReference>
<dbReference type="Ensembl" id="ENST00000394718.4">
    <property type="protein sequence ID" value="ENSP00000378207.3"/>
    <property type="gene ID" value="ENSG00000179841.8"/>
</dbReference>
<dbReference type="GeneID" id="9495"/>
<dbReference type="KEGG" id="hsa:9495"/>
<dbReference type="MANE-Select" id="ENST00000394718.4">
    <property type="protein sequence ID" value="ENSP00000378207.3"/>
    <property type="RefSeq nucleotide sequence ID" value="NM_004857.3"/>
    <property type="RefSeq protein sequence ID" value="NP_004848.3"/>
</dbReference>
<dbReference type="UCSC" id="uc001xhd.4">
    <property type="organism name" value="human"/>
</dbReference>
<dbReference type="AGR" id="HGNC:375"/>
<dbReference type="CTD" id="9495"/>
<dbReference type="DisGeNET" id="9495"/>
<dbReference type="GeneCards" id="AKAP5"/>
<dbReference type="HGNC" id="HGNC:375">
    <property type="gene designation" value="AKAP5"/>
</dbReference>
<dbReference type="HPA" id="ENSG00000179841">
    <property type="expression patterns" value="Tissue enriched (brain)"/>
</dbReference>
<dbReference type="MIM" id="604688">
    <property type="type" value="gene"/>
</dbReference>
<dbReference type="neXtProt" id="NX_P24588"/>
<dbReference type="OpenTargets" id="ENSG00000179841"/>
<dbReference type="PharmGKB" id="PA24669"/>
<dbReference type="VEuPathDB" id="HostDB:ENSG00000179841"/>
<dbReference type="eggNOG" id="ENOG502S1NI">
    <property type="taxonomic scope" value="Eukaryota"/>
</dbReference>
<dbReference type="GeneTree" id="ENSGT00390000019941"/>
<dbReference type="HOGENOM" id="CLU_052825_0_0_1"/>
<dbReference type="InParanoid" id="P24588"/>
<dbReference type="OMA" id="PCIKFSK"/>
<dbReference type="OrthoDB" id="9905114at2759"/>
<dbReference type="PAN-GO" id="P24588">
    <property type="GO annotations" value="11 GO annotations based on evolutionary models"/>
</dbReference>
<dbReference type="PhylomeDB" id="P24588"/>
<dbReference type="TreeFam" id="TF105404"/>
<dbReference type="PathwayCommons" id="P24588"/>
<dbReference type="Reactome" id="R-HSA-381676">
    <property type="pathway name" value="Glucagon-like Peptide-1 (GLP1) regulates insulin secretion"/>
</dbReference>
<dbReference type="Reactome" id="R-HSA-399719">
    <property type="pathway name" value="Trafficking of AMPA receptors"/>
</dbReference>
<dbReference type="Reactome" id="R-HSA-9010642">
    <property type="pathway name" value="ROBO receptors bind AKAP5"/>
</dbReference>
<dbReference type="SignaLink" id="P24588"/>
<dbReference type="SIGNOR" id="P24588"/>
<dbReference type="BioGRID-ORCS" id="9495">
    <property type="hits" value="12 hits in 1150 CRISPR screens"/>
</dbReference>
<dbReference type="EvolutionaryTrace" id="P24588"/>
<dbReference type="GeneWiki" id="AKAP5"/>
<dbReference type="GenomeRNAi" id="9495"/>
<dbReference type="Pharos" id="P24588">
    <property type="development level" value="Tbio"/>
</dbReference>
<dbReference type="PRO" id="PR:P24588"/>
<dbReference type="Proteomes" id="UP000005640">
    <property type="component" value="Chromosome 14"/>
</dbReference>
<dbReference type="RNAct" id="P24588">
    <property type="molecule type" value="protein"/>
</dbReference>
<dbReference type="Bgee" id="ENSG00000179841">
    <property type="expression patterns" value="Expressed in middle temporal gyrus and 159 other cell types or tissues"/>
</dbReference>
<dbReference type="GO" id="GO:0009898">
    <property type="term" value="C:cytoplasmic side of plasma membrane"/>
    <property type="evidence" value="ECO:0000314"/>
    <property type="project" value="UniProtKB"/>
</dbReference>
<dbReference type="GO" id="GO:0005829">
    <property type="term" value="C:cytosol"/>
    <property type="evidence" value="ECO:0000304"/>
    <property type="project" value="Reactome"/>
</dbReference>
<dbReference type="GO" id="GO:0030425">
    <property type="term" value="C:dendrite"/>
    <property type="evidence" value="ECO:0000250"/>
    <property type="project" value="UniProtKB"/>
</dbReference>
<dbReference type="GO" id="GO:0032590">
    <property type="term" value="C:dendrite membrane"/>
    <property type="evidence" value="ECO:0000318"/>
    <property type="project" value="GO_Central"/>
</dbReference>
<dbReference type="GO" id="GO:0043197">
    <property type="term" value="C:dendritic spine"/>
    <property type="evidence" value="ECO:0000318"/>
    <property type="project" value="GO_Central"/>
</dbReference>
<dbReference type="GO" id="GO:0060076">
    <property type="term" value="C:excitatory synapse"/>
    <property type="evidence" value="ECO:0000318"/>
    <property type="project" value="GO_Central"/>
</dbReference>
<dbReference type="GO" id="GO:0045121">
    <property type="term" value="C:membrane raft"/>
    <property type="evidence" value="ECO:0000315"/>
    <property type="project" value="UniProtKB"/>
</dbReference>
<dbReference type="GO" id="GO:0005886">
    <property type="term" value="C:plasma membrane"/>
    <property type="evidence" value="ECO:0000304"/>
    <property type="project" value="Reactome"/>
</dbReference>
<dbReference type="GO" id="GO:0014069">
    <property type="term" value="C:postsynaptic density"/>
    <property type="evidence" value="ECO:0000318"/>
    <property type="project" value="GO_Central"/>
</dbReference>
<dbReference type="GO" id="GO:0045211">
    <property type="term" value="C:postsynaptic membrane"/>
    <property type="evidence" value="ECO:0007669"/>
    <property type="project" value="UniProtKB-SubCell"/>
</dbReference>
<dbReference type="GO" id="GO:0098837">
    <property type="term" value="C:postsynaptic recycling endosome"/>
    <property type="evidence" value="ECO:0000314"/>
    <property type="project" value="UniProtKB"/>
</dbReference>
<dbReference type="GO" id="GO:0098944">
    <property type="term" value="C:postsynaptic recycling endosome membrane"/>
    <property type="evidence" value="ECO:0007669"/>
    <property type="project" value="UniProtKB-SubCell"/>
</dbReference>
<dbReference type="GO" id="GO:0008287">
    <property type="term" value="C:protein serine/threonine phosphatase complex"/>
    <property type="evidence" value="ECO:0000303"/>
    <property type="project" value="ComplexPortal"/>
</dbReference>
<dbReference type="GO" id="GO:0008179">
    <property type="term" value="F:adenylate cyclase binding"/>
    <property type="evidence" value="ECO:0000353"/>
    <property type="project" value="UniProtKB"/>
</dbReference>
<dbReference type="GO" id="GO:0031698">
    <property type="term" value="F:beta-2 adrenergic receptor binding"/>
    <property type="evidence" value="ECO:0000318"/>
    <property type="project" value="GO_Central"/>
</dbReference>
<dbReference type="GO" id="GO:0005516">
    <property type="term" value="F:calmodulin binding"/>
    <property type="evidence" value="ECO:0000269"/>
    <property type="project" value="DisProt"/>
</dbReference>
<dbReference type="GO" id="GO:0050811">
    <property type="term" value="F:GABA receptor binding"/>
    <property type="evidence" value="ECO:0000318"/>
    <property type="project" value="GO_Central"/>
</dbReference>
<dbReference type="GO" id="GO:0035254">
    <property type="term" value="F:glutamate receptor binding"/>
    <property type="evidence" value="ECO:0000314"/>
    <property type="project" value="SynGO-UCL"/>
</dbReference>
<dbReference type="GO" id="GO:0060090">
    <property type="term" value="F:molecular adaptor activity"/>
    <property type="evidence" value="ECO:0000318"/>
    <property type="project" value="GO_Central"/>
</dbReference>
<dbReference type="GO" id="GO:0051018">
    <property type="term" value="F:protein kinase A binding"/>
    <property type="evidence" value="ECO:0000304"/>
    <property type="project" value="ProtInc"/>
</dbReference>
<dbReference type="GO" id="GO:0034237">
    <property type="term" value="F:protein kinase A regulatory subunit binding"/>
    <property type="evidence" value="ECO:0000314"/>
    <property type="project" value="MGI"/>
</dbReference>
<dbReference type="GO" id="GO:0030346">
    <property type="term" value="F:protein phosphatase 2B binding"/>
    <property type="evidence" value="ECO:0000314"/>
    <property type="project" value="SynGO-UCL"/>
</dbReference>
<dbReference type="GO" id="GO:0097110">
    <property type="term" value="F:scaffold protein binding"/>
    <property type="evidence" value="ECO:0000353"/>
    <property type="project" value="SynGO-UCL"/>
</dbReference>
<dbReference type="GO" id="GO:0017124">
    <property type="term" value="F:SH3 domain binding"/>
    <property type="evidence" value="ECO:0000353"/>
    <property type="project" value="SynGO-UCL"/>
</dbReference>
<dbReference type="GO" id="GO:0007193">
    <property type="term" value="P:adenylate cyclase-inhibiting G protein-coupled receptor signaling pathway"/>
    <property type="evidence" value="ECO:0000315"/>
    <property type="project" value="UniProtKB"/>
</dbReference>
<dbReference type="GO" id="GO:0033173">
    <property type="term" value="P:calcineurin-NFAT signaling cascade"/>
    <property type="evidence" value="ECO:0000315"/>
    <property type="project" value="UniProtKB"/>
</dbReference>
<dbReference type="GO" id="GO:0007268">
    <property type="term" value="P:chemical synaptic transmission"/>
    <property type="evidence" value="ECO:0000304"/>
    <property type="project" value="ProtInc"/>
</dbReference>
<dbReference type="GO" id="GO:0007194">
    <property type="term" value="P:negative regulation of adenylate cyclase activity"/>
    <property type="evidence" value="ECO:0000315"/>
    <property type="project" value="UniProtKB"/>
</dbReference>
<dbReference type="GO" id="GO:0070886">
    <property type="term" value="P:positive regulation of calcineurin-NFAT signaling cascade"/>
    <property type="evidence" value="ECO:0000303"/>
    <property type="project" value="ComplexPortal"/>
</dbReference>
<dbReference type="GO" id="GO:1905665">
    <property type="term" value="P:positive regulation of calcium ion import across plasma membrane"/>
    <property type="evidence" value="ECO:0000303"/>
    <property type="project" value="ComplexPortal"/>
</dbReference>
<dbReference type="GO" id="GO:1905751">
    <property type="term" value="P:positive regulation of endosome to plasma membrane protein transport"/>
    <property type="evidence" value="ECO:0000315"/>
    <property type="project" value="UniProtKB"/>
</dbReference>
<dbReference type="GO" id="GO:1900273">
    <property type="term" value="P:positive regulation of long-term synaptic potentiation"/>
    <property type="evidence" value="ECO:0000315"/>
    <property type="project" value="UniProtKB"/>
</dbReference>
<dbReference type="GO" id="GO:1903078">
    <property type="term" value="P:positive regulation of protein localization to plasma membrane"/>
    <property type="evidence" value="ECO:0000315"/>
    <property type="project" value="UniProtKB"/>
</dbReference>
<dbReference type="GO" id="GO:0010738">
    <property type="term" value="P:regulation of protein kinase A signaling"/>
    <property type="evidence" value="ECO:0000315"/>
    <property type="project" value="UniProtKB"/>
</dbReference>
<dbReference type="GO" id="GO:0007165">
    <property type="term" value="P:signal transduction"/>
    <property type="evidence" value="ECO:0000303"/>
    <property type="project" value="ProtInc"/>
</dbReference>
<dbReference type="IDEAL" id="IID00233"/>
<dbReference type="InterPro" id="IPR042375">
    <property type="entry name" value="AKAP5"/>
</dbReference>
<dbReference type="InterPro" id="IPR001573">
    <property type="entry name" value="AKAP_WSK"/>
</dbReference>
<dbReference type="PANTHER" id="PTHR15182:SF0">
    <property type="entry name" value="A-KINASE ANCHOR PROTEIN 5"/>
    <property type="match status" value="1"/>
</dbReference>
<dbReference type="PANTHER" id="PTHR15182">
    <property type="entry name" value="A-KINASE ANCHOR PROTEIN 5-RELATED"/>
    <property type="match status" value="1"/>
</dbReference>
<dbReference type="Pfam" id="PF03832">
    <property type="entry name" value="WSK"/>
    <property type="match status" value="1"/>
</dbReference>
<dbReference type="PROSITE" id="PS51893">
    <property type="entry name" value="AKAP_CAM_BD"/>
    <property type="match status" value="1"/>
</dbReference>
<comment type="function">
    <text evidence="2 7 11 12">Multivalent scaffold protein that anchors the cAMP-dependent protein kinase/PKA to cytoskeletal and/or organelle-associated proteins, targeting the signal carried by cAMP to specific intracellular effectors (PubMed:1512224). Association with the beta2-adrenergic receptor (beta2-AR) not only regulates beta2-AR signaling pathway, but also the activation by PKA by switching off the beta2-AR signaling cascade. Plays a role in long term synaptic potentiation by regulating protein trafficking from the dendritic recycling endosomes to the plasma membrane and controlling both structural and functional plasticity at excitatory synapses (PubMed:25589740). In hippocampal pyramidal neurons, recruits KCNK2/TREK-1 channel at postsynaptic dense bodies microdomains and converts it to a leak channel no longer sensitive to stimulation by arachidonic acid, acidic pH or mechanical stress, nor inhibited by Gq-coupled receptors but still under the negative control of Gs-coupled receptors (By similarity). Associates with ORAI1 pore-forming subunit of CRAC channels in Ca(2+) signaling microdomains where it recruits NFATC2/NFAT1 and couples store-operated Ca(2+) influx to calmodulin and calcineurin signaling and activation of NFAT-dependent transcriptional responses (PubMed:33941685).</text>
</comment>
<comment type="subunit">
    <text evidence="1 2 3 9 10 12">Binding protein for dimer of the RII-beta regulatory subunit of cAMP-dependent protein kinase (PKA) and also for the protein kinase C (PKC) and the phosphatase calcineurin (PP2B). Each enzyme is inhibited when bound to the anchoring protein. Also binds the beta2-adrenergic receptor. Part of a complex containing AKAP5, ADCY5, ADCY6 and PDE4C (By similarity). Interacts with ADCY8, and enhances its phosphorylation at lipid rafts. Interacts with ORAI1 (isoform alpha) (via N-terminus) upon store depletion and in response to LTC4. Does not interact with ORAI2 and ORAI3 paralogs. Interacts (via leucine zipper domain) with NFATC2/NFAT1 (PubMed:33941685). Interacts with calmodulin; the interaction is calcium-independent (PubMed:24349250). Interacts with KCNQ2; the interaction may help KCNQ2 channel complex to retain calcium-bound calmodulin (By similarity). Interacts with KCNK2; the channel is recruited to postsynaptic microdomains by AKAP5 where it can integrate neurotransmitter receptor signals. Part of a complex composed of AKAP5 and ADRB2.</text>
</comment>
<comment type="interaction">
    <interactant intactId="EBI-703640">
        <id>P24588</id>
    </interactant>
    <interactant intactId="EBI-15637215">
        <id>Q08209-1</id>
        <label>PPP3CA</label>
    </interactant>
    <organismsDiffer>false</organismsDiffer>
    <experiments>6</experiments>
</comment>
<comment type="interaction">
    <interactant intactId="EBI-703640">
        <id>P24588</id>
    </interactant>
    <interactant intactId="EBI-11959013">
        <id>Q08209-2</id>
        <label>PPP3CA</label>
    </interactant>
    <organismsDiffer>false</organismsDiffer>
    <experiments>3</experiments>
</comment>
<comment type="interaction">
    <interactant intactId="EBI-703640">
        <id>P24588</id>
    </interactant>
    <interactant intactId="EBI-476431">
        <id>P10644</id>
        <label>PRKAR1A</label>
    </interactant>
    <organismsDiffer>false</organismsDiffer>
    <experiments>3</experiments>
</comment>
<comment type="interaction">
    <interactant intactId="EBI-703640">
        <id>P24588</id>
    </interactant>
    <interactant intactId="EBI-2556122">
        <id>P13861</id>
        <label>PRKAR2A</label>
    </interactant>
    <organismsDiffer>false</organismsDiffer>
    <experiments>5</experiments>
</comment>
<comment type="interaction">
    <interactant intactId="EBI-703640">
        <id>P24588</id>
    </interactant>
    <interactant intactId="EBI-2930670">
        <id>P31323</id>
        <label>PRKAR2B</label>
    </interactant>
    <organismsDiffer>false</organismsDiffer>
    <experiments>5</experiments>
</comment>
<comment type="interaction">
    <interactant intactId="EBI-703640">
        <id>P24588</id>
    </interactant>
    <interactant intactId="EBI-1378139">
        <id>Q9HAT0</id>
        <label>ROPN1</label>
    </interactant>
    <organismsDiffer>false</organismsDiffer>
    <experiments>3</experiments>
</comment>
<comment type="interaction">
    <interactant intactId="EBI-703640">
        <id>P24588</id>
    </interactant>
    <interactant intactId="EBI-9033237">
        <id>Q96C74</id>
        <label>ROPN1L</label>
    </interactant>
    <organismsDiffer>false</organismsDiffer>
    <experiments>3</experiments>
</comment>
<comment type="interaction">
    <interactant intactId="EBI-703640">
        <id>P24588</id>
    </interactant>
    <interactant intactId="EBI-8088969">
        <id>Q9HBX9</id>
        <label>RXFP1</label>
    </interactant>
    <organismsDiffer>false</organismsDiffer>
    <experiments>2</experiments>
</comment>
<comment type="interaction">
    <interactant intactId="EBI-703640">
        <id>P24588</id>
    </interactant>
    <interactant intactId="EBI-703793">
        <id>P35561</id>
        <label>Kcnj2</label>
    </interactant>
    <organismsDiffer>true</organismsDiffer>
    <experiments>2</experiments>
</comment>
<comment type="subcellular location">
    <subcellularLocation>
        <location evidence="9 11">Postsynaptic recycling endosome membrane</location>
        <topology evidence="9">Lipid-anchor</topology>
    </subcellularLocation>
    <subcellularLocation>
        <location evidence="2">Cell projection</location>
        <location evidence="2">Dendrite</location>
    </subcellularLocation>
    <subcellularLocation>
        <location evidence="2">Postsynaptic cell membrane</location>
        <topology>Lipid-anchor</topology>
    </subcellularLocation>
    <text evidence="9">Associates with lipid rafts.</text>
</comment>
<comment type="tissue specificity">
    <text>Predominantly in the cerebral cortex and the postsynaptic densities of the forebrain, and to a lesser extent in adrenal medulla, lung and anterior pituitary.</text>
</comment>
<comment type="domain">
    <text>RII-alpha binding site, predicted to form an amphipathic helix, could participate in protein-protein interactions with a complementary surface on the R-subunit dimer.</text>
</comment>
<comment type="domain">
    <text>The N-terminal region, which is highly basic, is required for interaction with calmodulin.</text>
</comment>
<comment type="PTM">
    <text evidence="9 11">Palmitoylated (PubMed:21771783, PubMed:25589740). Palmitoylation at Cys-36 and Cys-129 play a key role in the targeting of AKAP5 to lipid rafts (PubMed:21771783). Palmitoylation by ZDHHC2 is required for AKAP5 function in LTP-stimulated recycling endosome exocytosis (PubMed:25589740).</text>
</comment>
<feature type="chain" id="PRO_0000064529" description="A-kinase anchor protein 5">
    <location>
        <begin position="1"/>
        <end position="427"/>
    </location>
</feature>
<feature type="region of interest" description="Essential to the intracellular anchoring function" evidence="1">
    <location>
        <begin position="1"/>
        <end position="170"/>
    </location>
</feature>
<feature type="region of interest" description="Disordered" evidence="5">
    <location>
        <begin position="1"/>
        <end position="122"/>
    </location>
</feature>
<feature type="region of interest" description="Disordered" evidence="5">
    <location>
        <begin position="171"/>
        <end position="205"/>
    </location>
</feature>
<feature type="region of interest" description="Disordered" evidence="5">
    <location>
        <begin position="239"/>
        <end position="269"/>
    </location>
</feature>
<feature type="region of interest" description="Disordered" evidence="5">
    <location>
        <begin position="281"/>
        <end position="333"/>
    </location>
</feature>
<feature type="region of interest" description="PKA-RII subunit binding domain">
    <location>
        <begin position="392"/>
        <end position="405"/>
    </location>
</feature>
<feature type="region of interest" description="Tethers NFATC2 to CRAC channels" evidence="12">
    <location>
        <begin position="410"/>
        <end position="427"/>
    </location>
</feature>
<feature type="short sequence motif" description="AKAP CaM-binding" evidence="4">
    <location>
        <begin position="76"/>
        <end position="96"/>
    </location>
</feature>
<feature type="compositionally biased region" description="Basic and acidic residues" evidence="5">
    <location>
        <begin position="8"/>
        <end position="19"/>
    </location>
</feature>
<feature type="compositionally biased region" description="Basic residues" evidence="5">
    <location>
        <begin position="37"/>
        <end position="48"/>
    </location>
</feature>
<feature type="compositionally biased region" description="Basic and acidic residues" evidence="5">
    <location>
        <begin position="92"/>
        <end position="102"/>
    </location>
</feature>
<feature type="compositionally biased region" description="Polar residues" evidence="5">
    <location>
        <begin position="171"/>
        <end position="182"/>
    </location>
</feature>
<feature type="compositionally biased region" description="Polar residues" evidence="5">
    <location>
        <begin position="242"/>
        <end position="252"/>
    </location>
</feature>
<feature type="compositionally biased region" description="Basic and acidic residues" evidence="5">
    <location>
        <begin position="302"/>
        <end position="333"/>
    </location>
</feature>
<feature type="modified residue" description="Phosphoserine" evidence="2">
    <location>
        <position position="22"/>
    </location>
</feature>
<feature type="lipid moiety-binding region" description="S-palmitoyl cysteine" evidence="9">
    <location>
        <position position="36"/>
    </location>
</feature>
<feature type="lipid moiety-binding region" description="S-palmitoyl cysteine" evidence="9">
    <location>
        <position position="129"/>
    </location>
</feature>
<feature type="sequence variant" id="VAR_056732" description="In dbSNP:rs2230491.">
    <original>P</original>
    <variation>L</variation>
    <location>
        <position position="100"/>
    </location>
</feature>
<feature type="sequence variant" id="VAR_060735" description="In dbSNP:rs1256149." evidence="6 7 8 13">
    <original>T</original>
    <variation>I</variation>
    <location>
        <position position="203"/>
    </location>
</feature>
<feature type="sequence variant" id="VAR_056733" description="In dbSNP:rs34433837.">
    <original>E</original>
    <variation>K</variation>
    <location>
        <position position="314"/>
    </location>
</feature>
<feature type="mutagenesis site" description="Loss of palmitoylation by ZDHHC2; when associated with S-129." evidence="11">
    <original>C</original>
    <variation>S</variation>
    <location>
        <position position="36"/>
    </location>
</feature>
<feature type="mutagenesis site" description="Loss of palmitoylation by ZDHHC2; when associated with S-36." evidence="11">
    <original>C</original>
    <variation>S</variation>
    <location>
        <position position="129"/>
    </location>
</feature>
<feature type="mutagenesis site" description="Prevents or diminishes RII binding." evidence="7">
    <original>L</original>
    <variation>P</variation>
    <location>
        <position position="392"/>
    </location>
</feature>
<feature type="mutagenesis site" description="Prevents or diminishes RII binding." evidence="7">
    <original>A</original>
    <variation>P</variation>
    <location>
        <position position="396"/>
    </location>
</feature>
<feature type="mutagenesis site" description="Prevents or diminishes RII binding." evidence="7">
    <original>V</original>
    <variation>P</variation>
    <location>
        <position position="400"/>
    </location>
</feature>
<feature type="mutagenesis site" description="Prevents or diminishes RII binding." evidence="7">
    <original>Q</original>
    <variation>P</variation>
    <location>
        <position position="405"/>
    </location>
</feature>
<feature type="mutagenesis site" description="Prevents or diminishes RII binding." evidence="7">
    <original>I</original>
    <variation>P</variation>
    <location>
        <position position="408"/>
    </location>
</feature>
<feature type="sequence conflict" description="In Ref. 1; AAA58363." evidence="14" ref="1">
    <original>R</original>
    <variation>Q</variation>
    <location>
        <position position="188"/>
    </location>
</feature>
<feature type="sequence conflict" description="In Ref. 6; no nucleotide entry." evidence="14" ref="6">
    <original>S</original>
    <variation>Y</variation>
    <location>
        <position position="407"/>
    </location>
</feature>
<feature type="helix" evidence="17">
    <location>
        <begin position="79"/>
        <end position="83"/>
    </location>
</feature>
<feature type="strand" evidence="16">
    <location>
        <begin position="339"/>
        <end position="344"/>
    </location>
</feature>
<feature type="helix" evidence="15">
    <location>
        <begin position="393"/>
        <end position="408"/>
    </location>
</feature>
<feature type="turn" evidence="15">
    <location>
        <begin position="409"/>
        <end position="411"/>
    </location>
</feature>
<keyword id="KW-0002">3D-structure</keyword>
<keyword id="KW-0112">Calmodulin-binding</keyword>
<keyword id="KW-1003">Cell membrane</keyword>
<keyword id="KW-0966">Cell projection</keyword>
<keyword id="KW-0967">Endosome</keyword>
<keyword id="KW-0449">Lipoprotein</keyword>
<keyword id="KW-0472">Membrane</keyword>
<keyword id="KW-0564">Palmitate</keyword>
<keyword id="KW-0597">Phosphoprotein</keyword>
<keyword id="KW-0628">Postsynaptic cell membrane</keyword>
<keyword id="KW-1267">Proteomics identification</keyword>
<keyword id="KW-1185">Reference proteome</keyword>
<keyword id="KW-0770">Synapse</keyword>
<gene>
    <name type="primary">AKAP5</name>
    <name type="synonym">AKAP79</name>
</gene>
<name>AKAP5_HUMAN</name>
<proteinExistence type="evidence at protein level"/>
<evidence type="ECO:0000250" key="1"/>
<evidence type="ECO:0000250" key="2">
    <source>
        <dbReference type="UniProtKB" id="D3YVF0"/>
    </source>
</evidence>
<evidence type="ECO:0000250" key="3">
    <source>
        <dbReference type="UniProtKB" id="P24587"/>
    </source>
</evidence>
<evidence type="ECO:0000255" key="4">
    <source>
        <dbReference type="PROSITE-ProRule" id="PRU01241"/>
    </source>
</evidence>
<evidence type="ECO:0000256" key="5">
    <source>
        <dbReference type="SAM" id="MobiDB-lite"/>
    </source>
</evidence>
<evidence type="ECO:0000269" key="6">
    <source>
    </source>
</evidence>
<evidence type="ECO:0000269" key="7">
    <source>
    </source>
</evidence>
<evidence type="ECO:0000269" key="8">
    <source>
    </source>
</evidence>
<evidence type="ECO:0000269" key="9">
    <source>
    </source>
</evidence>
<evidence type="ECO:0000269" key="10">
    <source>
    </source>
</evidence>
<evidence type="ECO:0000269" key="11">
    <source>
    </source>
</evidence>
<evidence type="ECO:0000269" key="12">
    <source>
    </source>
</evidence>
<evidence type="ECO:0000269" key="13">
    <source ref="4"/>
</evidence>
<evidence type="ECO:0000305" key="14"/>
<evidence type="ECO:0007829" key="15">
    <source>
        <dbReference type="PDB" id="2H9R"/>
    </source>
</evidence>
<evidence type="ECO:0007829" key="16">
    <source>
        <dbReference type="PDB" id="3LL8"/>
    </source>
</evidence>
<evidence type="ECO:0007829" key="17">
    <source>
        <dbReference type="PDB" id="5NIN"/>
    </source>
</evidence>
<reference key="1">
    <citation type="journal article" date="1992" name="J. Biol. Chem.">
        <title>Localization of the cAMP-dependent protein kinase to the postsynaptic densities by A-kinase anchoring proteins. Characterization of AKAP 79.</title>
        <authorList>
            <person name="Carr D.W."/>
            <person name="Stofko-Hahn R.E."/>
            <person name="Fraser I.D.C."/>
            <person name="Cone R.D."/>
            <person name="Scott J.D."/>
        </authorList>
    </citation>
    <scope>NUCLEOTIDE SEQUENCE [MRNA]</scope>
    <scope>FUNCTION</scope>
    <scope>MUTAGENESIS OF LEU-392; ALA-396; VAL-400; GLN-405 AND ILE-408</scope>
    <scope>VARIANT ILE-203</scope>
    <source>
        <tissue>Thyroid</tissue>
    </source>
</reference>
<reference key="2">
    <citation type="journal article" date="2004" name="Nat. Genet.">
        <title>Complete sequencing and characterization of 21,243 full-length human cDNAs.</title>
        <authorList>
            <person name="Ota T."/>
            <person name="Suzuki Y."/>
            <person name="Nishikawa T."/>
            <person name="Otsuki T."/>
            <person name="Sugiyama T."/>
            <person name="Irie R."/>
            <person name="Wakamatsu A."/>
            <person name="Hayashi K."/>
            <person name="Sato H."/>
            <person name="Nagai K."/>
            <person name="Kimura K."/>
            <person name="Makita H."/>
            <person name="Sekine M."/>
            <person name="Obayashi M."/>
            <person name="Nishi T."/>
            <person name="Shibahara T."/>
            <person name="Tanaka T."/>
            <person name="Ishii S."/>
            <person name="Yamamoto J."/>
            <person name="Saito K."/>
            <person name="Kawai Y."/>
            <person name="Isono Y."/>
            <person name="Nakamura Y."/>
            <person name="Nagahari K."/>
            <person name="Murakami K."/>
            <person name="Yasuda T."/>
            <person name="Iwayanagi T."/>
            <person name="Wagatsuma M."/>
            <person name="Shiratori A."/>
            <person name="Sudo H."/>
            <person name="Hosoiri T."/>
            <person name="Kaku Y."/>
            <person name="Kodaira H."/>
            <person name="Kondo H."/>
            <person name="Sugawara M."/>
            <person name="Takahashi M."/>
            <person name="Kanda K."/>
            <person name="Yokoi T."/>
            <person name="Furuya T."/>
            <person name="Kikkawa E."/>
            <person name="Omura Y."/>
            <person name="Abe K."/>
            <person name="Kamihara K."/>
            <person name="Katsuta N."/>
            <person name="Sato K."/>
            <person name="Tanikawa M."/>
            <person name="Yamazaki M."/>
            <person name="Ninomiya K."/>
            <person name="Ishibashi T."/>
            <person name="Yamashita H."/>
            <person name="Murakawa K."/>
            <person name="Fujimori K."/>
            <person name="Tanai H."/>
            <person name="Kimata M."/>
            <person name="Watanabe M."/>
            <person name="Hiraoka S."/>
            <person name="Chiba Y."/>
            <person name="Ishida S."/>
            <person name="Ono Y."/>
            <person name="Takiguchi S."/>
            <person name="Watanabe S."/>
            <person name="Yosida M."/>
            <person name="Hotuta T."/>
            <person name="Kusano J."/>
            <person name="Kanehori K."/>
            <person name="Takahashi-Fujii A."/>
            <person name="Hara H."/>
            <person name="Tanase T.-O."/>
            <person name="Nomura Y."/>
            <person name="Togiya S."/>
            <person name="Komai F."/>
            <person name="Hara R."/>
            <person name="Takeuchi K."/>
            <person name="Arita M."/>
            <person name="Imose N."/>
            <person name="Musashino K."/>
            <person name="Yuuki H."/>
            <person name="Oshima A."/>
            <person name="Sasaki N."/>
            <person name="Aotsuka S."/>
            <person name="Yoshikawa Y."/>
            <person name="Matsunawa H."/>
            <person name="Ichihara T."/>
            <person name="Shiohata N."/>
            <person name="Sano S."/>
            <person name="Moriya S."/>
            <person name="Momiyama H."/>
            <person name="Satoh N."/>
            <person name="Takami S."/>
            <person name="Terashima Y."/>
            <person name="Suzuki O."/>
            <person name="Nakagawa S."/>
            <person name="Senoh A."/>
            <person name="Mizoguchi H."/>
            <person name="Goto Y."/>
            <person name="Shimizu F."/>
            <person name="Wakebe H."/>
            <person name="Hishigaki H."/>
            <person name="Watanabe T."/>
            <person name="Sugiyama A."/>
            <person name="Takemoto M."/>
            <person name="Kawakami B."/>
            <person name="Yamazaki M."/>
            <person name="Watanabe K."/>
            <person name="Kumagai A."/>
            <person name="Itakura S."/>
            <person name="Fukuzumi Y."/>
            <person name="Fujimori Y."/>
            <person name="Komiyama M."/>
            <person name="Tashiro H."/>
            <person name="Tanigami A."/>
            <person name="Fujiwara T."/>
            <person name="Ono T."/>
            <person name="Yamada K."/>
            <person name="Fujii Y."/>
            <person name="Ozaki K."/>
            <person name="Hirao M."/>
            <person name="Ohmori Y."/>
            <person name="Kawabata A."/>
            <person name="Hikiji T."/>
            <person name="Kobatake N."/>
            <person name="Inagaki H."/>
            <person name="Ikema Y."/>
            <person name="Okamoto S."/>
            <person name="Okitani R."/>
            <person name="Kawakami T."/>
            <person name="Noguchi S."/>
            <person name="Itoh T."/>
            <person name="Shigeta K."/>
            <person name="Senba T."/>
            <person name="Matsumura K."/>
            <person name="Nakajima Y."/>
            <person name="Mizuno T."/>
            <person name="Morinaga M."/>
            <person name="Sasaki M."/>
            <person name="Togashi T."/>
            <person name="Oyama M."/>
            <person name="Hata H."/>
            <person name="Watanabe M."/>
            <person name="Komatsu T."/>
            <person name="Mizushima-Sugano J."/>
            <person name="Satoh T."/>
            <person name="Shirai Y."/>
            <person name="Takahashi Y."/>
            <person name="Nakagawa K."/>
            <person name="Okumura K."/>
            <person name="Nagase T."/>
            <person name="Nomura N."/>
            <person name="Kikuchi H."/>
            <person name="Masuho Y."/>
            <person name="Yamashita R."/>
            <person name="Nakai K."/>
            <person name="Yada T."/>
            <person name="Nakamura Y."/>
            <person name="Ohara O."/>
            <person name="Isogai T."/>
            <person name="Sugano S."/>
        </authorList>
    </citation>
    <scope>NUCLEOTIDE SEQUENCE [LARGE SCALE MRNA]</scope>
    <scope>VARIANT ILE-203</scope>
    <source>
        <tissue>Spleen</tissue>
    </source>
</reference>
<reference key="3">
    <citation type="journal article" date="2003" name="Nature">
        <title>The DNA sequence and analysis of human chromosome 14.</title>
        <authorList>
            <person name="Heilig R."/>
            <person name="Eckenberg R."/>
            <person name="Petit J.-L."/>
            <person name="Fonknechten N."/>
            <person name="Da Silva C."/>
            <person name="Cattolico L."/>
            <person name="Levy M."/>
            <person name="Barbe V."/>
            <person name="De Berardinis V."/>
            <person name="Ureta-Vidal A."/>
            <person name="Pelletier E."/>
            <person name="Vico V."/>
            <person name="Anthouard V."/>
            <person name="Rowen L."/>
            <person name="Madan A."/>
            <person name="Qin S."/>
            <person name="Sun H."/>
            <person name="Du H."/>
            <person name="Pepin K."/>
            <person name="Artiguenave F."/>
            <person name="Robert C."/>
            <person name="Cruaud C."/>
            <person name="Bruels T."/>
            <person name="Jaillon O."/>
            <person name="Friedlander L."/>
            <person name="Samson G."/>
            <person name="Brottier P."/>
            <person name="Cure S."/>
            <person name="Segurens B."/>
            <person name="Aniere F."/>
            <person name="Samain S."/>
            <person name="Crespeau H."/>
            <person name="Abbasi N."/>
            <person name="Aiach N."/>
            <person name="Boscus D."/>
            <person name="Dickhoff R."/>
            <person name="Dors M."/>
            <person name="Dubois I."/>
            <person name="Friedman C."/>
            <person name="Gouyvenoux M."/>
            <person name="James R."/>
            <person name="Madan A."/>
            <person name="Mairey-Estrada B."/>
            <person name="Mangenot S."/>
            <person name="Martins N."/>
            <person name="Menard M."/>
            <person name="Oztas S."/>
            <person name="Ratcliffe A."/>
            <person name="Shaffer T."/>
            <person name="Trask B."/>
            <person name="Vacherie B."/>
            <person name="Bellemere C."/>
            <person name="Belser C."/>
            <person name="Besnard-Gonnet M."/>
            <person name="Bartol-Mavel D."/>
            <person name="Boutard M."/>
            <person name="Briez-Silla S."/>
            <person name="Combette S."/>
            <person name="Dufosse-Laurent V."/>
            <person name="Ferron C."/>
            <person name="Lechaplais C."/>
            <person name="Louesse C."/>
            <person name="Muselet D."/>
            <person name="Magdelenat G."/>
            <person name="Pateau E."/>
            <person name="Petit E."/>
            <person name="Sirvain-Trukniewicz P."/>
            <person name="Trybou A."/>
            <person name="Vega-Czarny N."/>
            <person name="Bataille E."/>
            <person name="Bluet E."/>
            <person name="Bordelais I."/>
            <person name="Dubois M."/>
            <person name="Dumont C."/>
            <person name="Guerin T."/>
            <person name="Haffray S."/>
            <person name="Hammadi R."/>
            <person name="Muanga J."/>
            <person name="Pellouin V."/>
            <person name="Robert D."/>
            <person name="Wunderle E."/>
            <person name="Gauguet G."/>
            <person name="Roy A."/>
            <person name="Sainte-Marthe L."/>
            <person name="Verdier J."/>
            <person name="Verdier-Discala C."/>
            <person name="Hillier L.W."/>
            <person name="Fulton L."/>
            <person name="McPherson J."/>
            <person name="Matsuda F."/>
            <person name="Wilson R."/>
            <person name="Scarpelli C."/>
            <person name="Gyapay G."/>
            <person name="Wincker P."/>
            <person name="Saurin W."/>
            <person name="Quetier F."/>
            <person name="Waterston R."/>
            <person name="Hood L."/>
            <person name="Weissenbach J."/>
        </authorList>
    </citation>
    <scope>NUCLEOTIDE SEQUENCE [LARGE SCALE GENOMIC DNA]</scope>
</reference>
<reference key="4">
    <citation type="submission" date="2005-07" db="EMBL/GenBank/DDBJ databases">
        <authorList>
            <person name="Mural R.J."/>
            <person name="Istrail S."/>
            <person name="Sutton G.G."/>
            <person name="Florea L."/>
            <person name="Halpern A.L."/>
            <person name="Mobarry C.M."/>
            <person name="Lippert R."/>
            <person name="Walenz B."/>
            <person name="Shatkay H."/>
            <person name="Dew I."/>
            <person name="Miller J.R."/>
            <person name="Flanigan M.J."/>
            <person name="Edwards N.J."/>
            <person name="Bolanos R."/>
            <person name="Fasulo D."/>
            <person name="Halldorsson B.V."/>
            <person name="Hannenhalli S."/>
            <person name="Turner R."/>
            <person name="Yooseph S."/>
            <person name="Lu F."/>
            <person name="Nusskern D.R."/>
            <person name="Shue B.C."/>
            <person name="Zheng X.H."/>
            <person name="Zhong F."/>
            <person name="Delcher A.L."/>
            <person name="Huson D.H."/>
            <person name="Kravitz S.A."/>
            <person name="Mouchard L."/>
            <person name="Reinert K."/>
            <person name="Remington K.A."/>
            <person name="Clark A.G."/>
            <person name="Waterman M.S."/>
            <person name="Eichler E.E."/>
            <person name="Adams M.D."/>
            <person name="Hunkapiller M.W."/>
            <person name="Myers E.W."/>
            <person name="Venter J.C."/>
        </authorList>
    </citation>
    <scope>NUCLEOTIDE SEQUENCE [LARGE SCALE GENOMIC DNA]</scope>
    <scope>VARIANT ILE-203</scope>
</reference>
<reference key="5">
    <citation type="journal article" date="2004" name="Genome Res.">
        <title>The status, quality, and expansion of the NIH full-length cDNA project: the Mammalian Gene Collection (MGC).</title>
        <authorList>
            <consortium name="The MGC Project Team"/>
        </authorList>
    </citation>
    <scope>NUCLEOTIDE SEQUENCE [LARGE SCALE MRNA]</scope>
    <scope>VARIANT ILE-203</scope>
</reference>
<reference key="6">
    <citation type="journal article" date="1992" name="J. Biol. Chem.">
        <title>Cloning and expression of an intron-less gene for AKAP 75, an anchor protein for the regulatory subunit of cAMP-dependent protein kinase II beta.</title>
        <authorList>
            <person name="Hirsch A.H."/>
            <person name="Glantz S.B."/>
            <person name="Li Y."/>
            <person name="You Y."/>
            <person name="Rubin C.S."/>
        </authorList>
    </citation>
    <scope>NUCLEOTIDE SEQUENCE [MRNA] OF 332-427</scope>
    <source>
        <tissue>Kidney</tissue>
    </source>
</reference>
<reference key="7">
    <citation type="journal article" date="2011" name="J. Biol. Chem.">
        <title>Palmitoylation targets AKAP79 protein to lipid rafts and promotes its regulation of calcium-sensitive adenylyl cyclase type 8.</title>
        <authorList>
            <person name="Delint-Ramirez I."/>
            <person name="Willoughby D."/>
            <person name="Hammond G.V."/>
            <person name="Ayling L.J."/>
            <person name="Cooper D.M."/>
        </authorList>
    </citation>
    <scope>PALMITOYLATION AT CYS-36 AND CYS-129</scope>
    <scope>INTERACTION WITH ADCY8</scope>
    <scope>SUBCELLULAR LOCATION</scope>
</reference>
<reference key="8">
    <citation type="journal article" date="2013" name="PLoS ONE">
        <title>A change in configuration of the calmodulin-KCNQ channel complex underlies Ca2+-dependent modulation of KCNQ channel activity.</title>
        <authorList>
            <person name="Kosenko A."/>
            <person name="Hoshi N."/>
        </authorList>
    </citation>
    <scope>INTERACTION WITH CALMODULIN</scope>
</reference>
<reference key="9">
    <citation type="journal article" date="2015" name="J. Neurosci.">
        <title>The palmitoyl acyltransferase DHHC2 regulates recycling endosome exocytosis and synaptic potentiation through palmitoylation of AKAP79/150.</title>
        <authorList>
            <person name="Woolfrey K.M."/>
            <person name="Sanderson J.L."/>
            <person name="Dell'Acqua M.L."/>
        </authorList>
    </citation>
    <scope>FUNCTION</scope>
    <scope>SUBCELLULAR LOCATION</scope>
    <scope>PALMITOYLATION AT CYS-36 AND CYS-129</scope>
    <scope>MUTAGENESIS OF CYS-36 AND CYS-129</scope>
</reference>
<reference key="10">
    <citation type="journal article" date="2021" name="Proc. Natl. Acad. Sci. U.S.A.">
        <title>The N terminus of Orai1 couples to the AKAP79 signaling complex to drive NFAT1 activation by local Ca2+ entry.</title>
        <authorList>
            <person name="Kar P."/>
            <person name="Lin Y.P."/>
            <person name="Bhardwaj R."/>
            <person name="Tucker C.J."/>
            <person name="Bird G.S."/>
            <person name="Hediger M.A."/>
            <person name="Monico C."/>
            <person name="Amin N."/>
            <person name="Parekh A.B."/>
        </authorList>
    </citation>
    <scope>FUNCTION</scope>
    <scope>INTERACTION WITH ORAI1 AND NFATC2</scope>
    <scope>REGION</scope>
</reference>